<feature type="chain" id="PRO_0000228289" description="Holo-[acyl-carrier-protein] synthase">
    <location>
        <begin position="1"/>
        <end position="157"/>
    </location>
</feature>
<feature type="binding site" evidence="1">
    <location>
        <position position="8"/>
    </location>
    <ligand>
        <name>Mg(2+)</name>
        <dbReference type="ChEBI" id="CHEBI:18420"/>
    </ligand>
</feature>
<feature type="binding site" evidence="1">
    <location>
        <position position="59"/>
    </location>
    <ligand>
        <name>Mg(2+)</name>
        <dbReference type="ChEBI" id="CHEBI:18420"/>
    </ligand>
</feature>
<sequence>MILGMGTDLCMISRIEKSVERFGDRFLNRVFTEAERAYADRFTGAARMGSYAKRWAAKEACAKALGTGFANGVLLQDIGVCNGPGGAPELLLSGGAEEALKRLTPSGQEAQLLVSMSDDPPFALAQVIIQSVPLAGVQSAPQASVRIEPLANAAKLR</sequence>
<dbReference type="EC" id="2.7.8.7" evidence="1"/>
<dbReference type="EMBL" id="CP000009">
    <property type="protein sequence ID" value="AAW61547.1"/>
    <property type="molecule type" value="Genomic_DNA"/>
</dbReference>
<dbReference type="RefSeq" id="WP_011253328.1">
    <property type="nucleotide sequence ID" value="NC_006677.1"/>
</dbReference>
<dbReference type="SMR" id="Q5FPZ9"/>
<dbReference type="STRING" id="290633.GOX1808"/>
<dbReference type="KEGG" id="gox:GOX1808"/>
<dbReference type="eggNOG" id="COG0736">
    <property type="taxonomic scope" value="Bacteria"/>
</dbReference>
<dbReference type="HOGENOM" id="CLU_089696_0_2_5"/>
<dbReference type="Proteomes" id="UP000006375">
    <property type="component" value="Chromosome"/>
</dbReference>
<dbReference type="GO" id="GO:0005737">
    <property type="term" value="C:cytoplasm"/>
    <property type="evidence" value="ECO:0007669"/>
    <property type="project" value="UniProtKB-SubCell"/>
</dbReference>
<dbReference type="GO" id="GO:0008897">
    <property type="term" value="F:holo-[acyl-carrier-protein] synthase activity"/>
    <property type="evidence" value="ECO:0007669"/>
    <property type="project" value="UniProtKB-UniRule"/>
</dbReference>
<dbReference type="GO" id="GO:0000287">
    <property type="term" value="F:magnesium ion binding"/>
    <property type="evidence" value="ECO:0007669"/>
    <property type="project" value="UniProtKB-UniRule"/>
</dbReference>
<dbReference type="GO" id="GO:0006633">
    <property type="term" value="P:fatty acid biosynthetic process"/>
    <property type="evidence" value="ECO:0007669"/>
    <property type="project" value="UniProtKB-UniRule"/>
</dbReference>
<dbReference type="Gene3D" id="3.90.470.20">
    <property type="entry name" value="4'-phosphopantetheinyl transferase domain"/>
    <property type="match status" value="1"/>
</dbReference>
<dbReference type="HAMAP" id="MF_00101">
    <property type="entry name" value="AcpS"/>
    <property type="match status" value="1"/>
</dbReference>
<dbReference type="InterPro" id="IPR008278">
    <property type="entry name" value="4-PPantetheinyl_Trfase_dom"/>
</dbReference>
<dbReference type="InterPro" id="IPR037143">
    <property type="entry name" value="4-PPantetheinyl_Trfase_dom_sf"/>
</dbReference>
<dbReference type="InterPro" id="IPR002582">
    <property type="entry name" value="ACPS"/>
</dbReference>
<dbReference type="InterPro" id="IPR004568">
    <property type="entry name" value="Ppantetheine-prot_Trfase_dom"/>
</dbReference>
<dbReference type="NCBIfam" id="TIGR00516">
    <property type="entry name" value="acpS"/>
    <property type="match status" value="1"/>
</dbReference>
<dbReference type="NCBIfam" id="TIGR00556">
    <property type="entry name" value="pantethn_trn"/>
    <property type="match status" value="1"/>
</dbReference>
<dbReference type="Pfam" id="PF01648">
    <property type="entry name" value="ACPS"/>
    <property type="match status" value="1"/>
</dbReference>
<dbReference type="SUPFAM" id="SSF56214">
    <property type="entry name" value="4'-phosphopantetheinyl transferase"/>
    <property type="match status" value="1"/>
</dbReference>
<comment type="function">
    <text evidence="1">Transfers the 4'-phosphopantetheine moiety from coenzyme A to a Ser of acyl-carrier-protein.</text>
</comment>
<comment type="catalytic activity">
    <reaction evidence="1">
        <text>apo-[ACP] + CoA = holo-[ACP] + adenosine 3',5'-bisphosphate + H(+)</text>
        <dbReference type="Rhea" id="RHEA:12068"/>
        <dbReference type="Rhea" id="RHEA-COMP:9685"/>
        <dbReference type="Rhea" id="RHEA-COMP:9690"/>
        <dbReference type="ChEBI" id="CHEBI:15378"/>
        <dbReference type="ChEBI" id="CHEBI:29999"/>
        <dbReference type="ChEBI" id="CHEBI:57287"/>
        <dbReference type="ChEBI" id="CHEBI:58343"/>
        <dbReference type="ChEBI" id="CHEBI:64479"/>
        <dbReference type="EC" id="2.7.8.7"/>
    </reaction>
</comment>
<comment type="cofactor">
    <cofactor evidence="1">
        <name>Mg(2+)</name>
        <dbReference type="ChEBI" id="CHEBI:18420"/>
    </cofactor>
</comment>
<comment type="subcellular location">
    <subcellularLocation>
        <location evidence="1">Cytoplasm</location>
    </subcellularLocation>
</comment>
<comment type="similarity">
    <text evidence="1">Belongs to the P-Pant transferase superfamily. AcpS family.</text>
</comment>
<reference key="1">
    <citation type="journal article" date="2005" name="Nat. Biotechnol.">
        <title>Complete genome sequence of the acetic acid bacterium Gluconobacter oxydans.</title>
        <authorList>
            <person name="Prust C."/>
            <person name="Hoffmeister M."/>
            <person name="Liesegang H."/>
            <person name="Wiezer A."/>
            <person name="Fricke W.F."/>
            <person name="Ehrenreich A."/>
            <person name="Gottschalk G."/>
            <person name="Deppenmeier U."/>
        </authorList>
    </citation>
    <scope>NUCLEOTIDE SEQUENCE [LARGE SCALE GENOMIC DNA]</scope>
    <source>
        <strain>621H</strain>
    </source>
</reference>
<proteinExistence type="inferred from homology"/>
<protein>
    <recommendedName>
        <fullName evidence="1">Holo-[acyl-carrier-protein] synthase</fullName>
        <shortName evidence="1">Holo-ACP synthase</shortName>
        <ecNumber evidence="1">2.7.8.7</ecNumber>
    </recommendedName>
    <alternativeName>
        <fullName evidence="1">4'-phosphopantetheinyl transferase AcpS</fullName>
    </alternativeName>
</protein>
<organism>
    <name type="scientific">Gluconobacter oxydans (strain 621H)</name>
    <name type="common">Gluconobacter suboxydans</name>
    <dbReference type="NCBI Taxonomy" id="290633"/>
    <lineage>
        <taxon>Bacteria</taxon>
        <taxon>Pseudomonadati</taxon>
        <taxon>Pseudomonadota</taxon>
        <taxon>Alphaproteobacteria</taxon>
        <taxon>Acetobacterales</taxon>
        <taxon>Acetobacteraceae</taxon>
        <taxon>Gluconobacter</taxon>
    </lineage>
</organism>
<name>ACPS_GLUOX</name>
<accession>Q5FPZ9</accession>
<evidence type="ECO:0000255" key="1">
    <source>
        <dbReference type="HAMAP-Rule" id="MF_00101"/>
    </source>
</evidence>
<gene>
    <name evidence="1" type="primary">acpS</name>
    <name type="ordered locus">GOX1808</name>
</gene>
<keyword id="KW-0963">Cytoplasm</keyword>
<keyword id="KW-0275">Fatty acid biosynthesis</keyword>
<keyword id="KW-0276">Fatty acid metabolism</keyword>
<keyword id="KW-0444">Lipid biosynthesis</keyword>
<keyword id="KW-0443">Lipid metabolism</keyword>
<keyword id="KW-0460">Magnesium</keyword>
<keyword id="KW-0479">Metal-binding</keyword>
<keyword id="KW-1185">Reference proteome</keyword>
<keyword id="KW-0808">Transferase</keyword>